<proteinExistence type="inferred from homology"/>
<gene>
    <name type="ordered locus">Syncc9605_0652</name>
</gene>
<organism>
    <name type="scientific">Synechococcus sp. (strain CC9605)</name>
    <dbReference type="NCBI Taxonomy" id="110662"/>
    <lineage>
        <taxon>Bacteria</taxon>
        <taxon>Bacillati</taxon>
        <taxon>Cyanobacteriota</taxon>
        <taxon>Cyanophyceae</taxon>
        <taxon>Synechococcales</taxon>
        <taxon>Synechococcaceae</taxon>
        <taxon>Synechococcus</taxon>
    </lineage>
</organism>
<protein>
    <recommendedName>
        <fullName evidence="1">Nucleotide-binding protein Syncc9605_0652</fullName>
    </recommendedName>
</protein>
<comment type="function">
    <text evidence="1">Nucleotide-binding protein.</text>
</comment>
<comment type="similarity">
    <text evidence="1">Belongs to the YajQ family.</text>
</comment>
<evidence type="ECO:0000255" key="1">
    <source>
        <dbReference type="HAMAP-Rule" id="MF_00632"/>
    </source>
</evidence>
<reference key="1">
    <citation type="submission" date="2005-07" db="EMBL/GenBank/DDBJ databases">
        <title>Complete sequence of Synechococcus sp. CC9605.</title>
        <authorList>
            <consortium name="US DOE Joint Genome Institute"/>
            <person name="Copeland A."/>
            <person name="Lucas S."/>
            <person name="Lapidus A."/>
            <person name="Barry K."/>
            <person name="Detter J.C."/>
            <person name="Glavina T."/>
            <person name="Hammon N."/>
            <person name="Israni S."/>
            <person name="Pitluck S."/>
            <person name="Schmutz J."/>
            <person name="Martinez M."/>
            <person name="Larimer F."/>
            <person name="Land M."/>
            <person name="Kyrpides N."/>
            <person name="Ivanova N."/>
            <person name="Richardson P."/>
        </authorList>
    </citation>
    <scope>NUCLEOTIDE SEQUENCE [LARGE SCALE GENOMIC DNA]</scope>
    <source>
        <strain>CC9605</strain>
    </source>
</reference>
<dbReference type="EMBL" id="CP000110">
    <property type="protein sequence ID" value="ABB34426.1"/>
    <property type="molecule type" value="Genomic_DNA"/>
</dbReference>
<dbReference type="RefSeq" id="WP_011363654.1">
    <property type="nucleotide sequence ID" value="NC_007516.1"/>
</dbReference>
<dbReference type="SMR" id="Q3ALV6"/>
<dbReference type="STRING" id="110662.Syncc9605_0652"/>
<dbReference type="KEGG" id="syd:Syncc9605_0652"/>
<dbReference type="eggNOG" id="COG1666">
    <property type="taxonomic scope" value="Bacteria"/>
</dbReference>
<dbReference type="HOGENOM" id="CLU_099839_0_0_3"/>
<dbReference type="OrthoDB" id="9801447at2"/>
<dbReference type="GO" id="GO:0005829">
    <property type="term" value="C:cytosol"/>
    <property type="evidence" value="ECO:0007669"/>
    <property type="project" value="TreeGrafter"/>
</dbReference>
<dbReference type="GO" id="GO:0000166">
    <property type="term" value="F:nucleotide binding"/>
    <property type="evidence" value="ECO:0007669"/>
    <property type="project" value="TreeGrafter"/>
</dbReference>
<dbReference type="CDD" id="cd11740">
    <property type="entry name" value="YajQ_like"/>
    <property type="match status" value="1"/>
</dbReference>
<dbReference type="Gene3D" id="3.30.70.860">
    <property type="match status" value="1"/>
</dbReference>
<dbReference type="Gene3D" id="3.30.70.990">
    <property type="entry name" value="YajQ-like, domain 2"/>
    <property type="match status" value="1"/>
</dbReference>
<dbReference type="HAMAP" id="MF_00632">
    <property type="entry name" value="YajQ"/>
    <property type="match status" value="1"/>
</dbReference>
<dbReference type="InterPro" id="IPR007551">
    <property type="entry name" value="DUF520"/>
</dbReference>
<dbReference type="InterPro" id="IPR035571">
    <property type="entry name" value="UPF0234-like_C"/>
</dbReference>
<dbReference type="InterPro" id="IPR035570">
    <property type="entry name" value="UPF0234_N"/>
</dbReference>
<dbReference type="InterPro" id="IPR036183">
    <property type="entry name" value="YajQ-like_sf"/>
</dbReference>
<dbReference type="NCBIfam" id="NF003819">
    <property type="entry name" value="PRK05412.1"/>
    <property type="match status" value="1"/>
</dbReference>
<dbReference type="PANTHER" id="PTHR30476">
    <property type="entry name" value="UPF0234 PROTEIN YAJQ"/>
    <property type="match status" value="1"/>
</dbReference>
<dbReference type="PANTHER" id="PTHR30476:SF0">
    <property type="entry name" value="UPF0234 PROTEIN YAJQ"/>
    <property type="match status" value="1"/>
</dbReference>
<dbReference type="Pfam" id="PF04461">
    <property type="entry name" value="DUF520"/>
    <property type="match status" value="1"/>
</dbReference>
<dbReference type="SUPFAM" id="SSF89963">
    <property type="entry name" value="YajQ-like"/>
    <property type="match status" value="2"/>
</dbReference>
<keyword id="KW-0547">Nucleotide-binding</keyword>
<sequence>MASTYSFDVVSDFDRQELVNTLDQVRRDVGNRYDLKDSNTEIDLEETELVITTASDMTLQAVEDVLRTKATKRNLSLKIFDFQTPETAGGNRVRQVVKLRKGLSQEIAKKLSKMVRDELKKVTVAIQGESVRITGKSKDDLQAAIQLVKGKEDELDVPLQFENYR</sequence>
<accession>Q3ALV6</accession>
<name>Y652_SYNSC</name>
<feature type="chain" id="PRO_1000147329" description="Nucleotide-binding protein Syncc9605_0652">
    <location>
        <begin position="1"/>
        <end position="165"/>
    </location>
</feature>